<gene>
    <name evidence="1" type="primary">apaH</name>
    <name type="ordered locus">Daro_3932</name>
</gene>
<protein>
    <recommendedName>
        <fullName evidence="1">Bis(5'-nucleosyl)-tetraphosphatase, symmetrical</fullName>
        <ecNumber evidence="1">3.6.1.41</ecNumber>
    </recommendedName>
    <alternativeName>
        <fullName evidence="1">Ap4A hydrolase</fullName>
    </alternativeName>
    <alternativeName>
        <fullName evidence="1">Diadenosine 5',5'''-P1,P4-tetraphosphate pyrophosphohydrolase</fullName>
    </alternativeName>
    <alternativeName>
        <fullName evidence="1">Diadenosine tetraphosphatase</fullName>
    </alternativeName>
</protein>
<accession>Q478S1</accession>
<proteinExistence type="inferred from homology"/>
<name>APAH_DECAR</name>
<organism>
    <name type="scientific">Dechloromonas aromatica (strain RCB)</name>
    <dbReference type="NCBI Taxonomy" id="159087"/>
    <lineage>
        <taxon>Bacteria</taxon>
        <taxon>Pseudomonadati</taxon>
        <taxon>Pseudomonadota</taxon>
        <taxon>Betaproteobacteria</taxon>
        <taxon>Rhodocyclales</taxon>
        <taxon>Azonexaceae</taxon>
        <taxon>Dechloromonas</taxon>
    </lineage>
</organism>
<feature type="chain" id="PRO_1000012056" description="Bis(5'-nucleosyl)-tetraphosphatase, symmetrical">
    <location>
        <begin position="1"/>
        <end position="276"/>
    </location>
</feature>
<sequence>MATYAIGDIQGCYDSLQRLLERCAFDPASDRLWLVGDLVNRGPKSLATLRLIKSLGPAALTVLGNHDLYLLMVAEGGAKFRGKDDTLQEILDAPDCAELLDWLRHQPICHTEGEYCLVHAGLLPQWTASRARELAREVEITLQGPDFREFILNLWGSEPAGWSDNLSGWARLRVIVNAMTRMRFCTLDGVMEFKVKGKLSNAPAGHIPWFDLPDRKSAKSVLVTGHWSALGLKVTPNLLALDSGCLWGGHLTAVRLEDRQVFQVDCSPTEALPLKR</sequence>
<dbReference type="EC" id="3.6.1.41" evidence="1"/>
<dbReference type="EMBL" id="CP000089">
    <property type="protein sequence ID" value="AAZ48660.1"/>
    <property type="molecule type" value="Genomic_DNA"/>
</dbReference>
<dbReference type="SMR" id="Q478S1"/>
<dbReference type="STRING" id="159087.Daro_3932"/>
<dbReference type="KEGG" id="dar:Daro_3932"/>
<dbReference type="eggNOG" id="COG0639">
    <property type="taxonomic scope" value="Bacteria"/>
</dbReference>
<dbReference type="HOGENOM" id="CLU_056184_2_0_4"/>
<dbReference type="OrthoDB" id="9807890at2"/>
<dbReference type="GO" id="GO:0008803">
    <property type="term" value="F:bis(5'-nucleosyl)-tetraphosphatase (symmetrical) activity"/>
    <property type="evidence" value="ECO:0007669"/>
    <property type="project" value="UniProtKB-UniRule"/>
</dbReference>
<dbReference type="CDD" id="cd07422">
    <property type="entry name" value="MPP_ApaH"/>
    <property type="match status" value="1"/>
</dbReference>
<dbReference type="Gene3D" id="3.60.21.10">
    <property type="match status" value="1"/>
</dbReference>
<dbReference type="HAMAP" id="MF_00199">
    <property type="entry name" value="ApaH"/>
    <property type="match status" value="1"/>
</dbReference>
<dbReference type="InterPro" id="IPR004617">
    <property type="entry name" value="ApaH"/>
</dbReference>
<dbReference type="InterPro" id="IPR004843">
    <property type="entry name" value="Calcineurin-like_PHP_ApaH"/>
</dbReference>
<dbReference type="InterPro" id="IPR029052">
    <property type="entry name" value="Metallo-depent_PP-like"/>
</dbReference>
<dbReference type="NCBIfam" id="TIGR00668">
    <property type="entry name" value="apaH"/>
    <property type="match status" value="1"/>
</dbReference>
<dbReference type="NCBIfam" id="NF001204">
    <property type="entry name" value="PRK00166.1"/>
    <property type="match status" value="1"/>
</dbReference>
<dbReference type="PANTHER" id="PTHR40942">
    <property type="match status" value="1"/>
</dbReference>
<dbReference type="PANTHER" id="PTHR40942:SF4">
    <property type="entry name" value="CYTOCHROME C5"/>
    <property type="match status" value="1"/>
</dbReference>
<dbReference type="Pfam" id="PF00149">
    <property type="entry name" value="Metallophos"/>
    <property type="match status" value="1"/>
</dbReference>
<dbReference type="PIRSF" id="PIRSF000903">
    <property type="entry name" value="B5n-ttraPtase_sm"/>
    <property type="match status" value="1"/>
</dbReference>
<dbReference type="SUPFAM" id="SSF56300">
    <property type="entry name" value="Metallo-dependent phosphatases"/>
    <property type="match status" value="1"/>
</dbReference>
<comment type="function">
    <text evidence="1">Hydrolyzes diadenosine 5',5'''-P1,P4-tetraphosphate to yield ADP.</text>
</comment>
<comment type="catalytic activity">
    <reaction evidence="1">
        <text>P(1),P(4)-bis(5'-adenosyl) tetraphosphate + H2O = 2 ADP + 2 H(+)</text>
        <dbReference type="Rhea" id="RHEA:24252"/>
        <dbReference type="ChEBI" id="CHEBI:15377"/>
        <dbReference type="ChEBI" id="CHEBI:15378"/>
        <dbReference type="ChEBI" id="CHEBI:58141"/>
        <dbReference type="ChEBI" id="CHEBI:456216"/>
        <dbReference type="EC" id="3.6.1.41"/>
    </reaction>
</comment>
<comment type="similarity">
    <text evidence="1">Belongs to the Ap4A hydrolase family.</text>
</comment>
<evidence type="ECO:0000255" key="1">
    <source>
        <dbReference type="HAMAP-Rule" id="MF_00199"/>
    </source>
</evidence>
<reference key="1">
    <citation type="journal article" date="2009" name="BMC Genomics">
        <title>Metabolic analysis of the soil microbe Dechloromonas aromatica str. RCB: indications of a surprisingly complex life-style and cryptic anaerobic pathways for aromatic degradation.</title>
        <authorList>
            <person name="Salinero K.K."/>
            <person name="Keller K."/>
            <person name="Feil W.S."/>
            <person name="Feil H."/>
            <person name="Trong S."/>
            <person name="Di Bartolo G."/>
            <person name="Lapidus A."/>
        </authorList>
    </citation>
    <scope>NUCLEOTIDE SEQUENCE [LARGE SCALE GENOMIC DNA]</scope>
    <source>
        <strain>RCB</strain>
    </source>
</reference>
<keyword id="KW-0378">Hydrolase</keyword>